<keyword id="KW-0066">ATP synthesis</keyword>
<keyword id="KW-0067">ATP-binding</keyword>
<keyword id="KW-0138">CF(0)</keyword>
<keyword id="KW-0150">Chloroplast</keyword>
<keyword id="KW-0375">Hydrogen ion transport</keyword>
<keyword id="KW-0406">Ion transport</keyword>
<keyword id="KW-0472">Membrane</keyword>
<keyword id="KW-0547">Nucleotide-binding</keyword>
<keyword id="KW-0934">Plastid</keyword>
<keyword id="KW-0691">RNA editing</keyword>
<keyword id="KW-0793">Thylakoid</keyword>
<keyword id="KW-0812">Transmembrane</keyword>
<keyword id="KW-1133">Transmembrane helix</keyword>
<keyword id="KW-0813">Transport</keyword>
<accession>Q85AL8</accession>
<evidence type="ECO:0000255" key="1">
    <source>
        <dbReference type="HAMAP-Rule" id="MF_01398"/>
    </source>
</evidence>
<evidence type="ECO:0000269" key="2">
    <source>
    </source>
</evidence>
<evidence type="ECO:0000269" key="3">
    <source>
    </source>
</evidence>
<organism>
    <name type="scientific">Anthoceros angustus</name>
    <name type="common">Hornwort</name>
    <name type="synonym">Anthoceros formosae</name>
    <dbReference type="NCBI Taxonomy" id="48387"/>
    <lineage>
        <taxon>Eukaryota</taxon>
        <taxon>Viridiplantae</taxon>
        <taxon>Streptophyta</taxon>
        <taxon>Embryophyta</taxon>
        <taxon>Anthocerotophyta</taxon>
        <taxon>Anthocerotopsida</taxon>
        <taxon>Anthocerotidae</taxon>
        <taxon>Anthocerotales</taxon>
        <taxon>Anthocerotaceae</taxon>
        <taxon>Anthoceros</taxon>
    </lineage>
</organism>
<dbReference type="EMBL" id="AB086179">
    <property type="protein sequence ID" value="BAC55332.1"/>
    <property type="molecule type" value="Genomic_DNA"/>
</dbReference>
<dbReference type="EMBL" id="AB087424">
    <property type="protein sequence ID" value="BAC55423.1"/>
    <property type="molecule type" value="mRNA"/>
</dbReference>
<dbReference type="RefSeq" id="NP_777396.1">
    <property type="nucleotide sequence ID" value="NC_004543.1"/>
</dbReference>
<dbReference type="SMR" id="Q85AL8"/>
<dbReference type="GeneID" id="2553483"/>
<dbReference type="GO" id="GO:0009535">
    <property type="term" value="C:chloroplast thylakoid membrane"/>
    <property type="evidence" value="ECO:0007669"/>
    <property type="project" value="UniProtKB-SubCell"/>
</dbReference>
<dbReference type="GO" id="GO:0045259">
    <property type="term" value="C:proton-transporting ATP synthase complex"/>
    <property type="evidence" value="ECO:0007669"/>
    <property type="project" value="UniProtKB-KW"/>
</dbReference>
<dbReference type="GO" id="GO:0005524">
    <property type="term" value="F:ATP binding"/>
    <property type="evidence" value="ECO:0007669"/>
    <property type="project" value="UniProtKB-KW"/>
</dbReference>
<dbReference type="GO" id="GO:0046933">
    <property type="term" value="F:proton-transporting ATP synthase activity, rotational mechanism"/>
    <property type="evidence" value="ECO:0007669"/>
    <property type="project" value="UniProtKB-UniRule"/>
</dbReference>
<dbReference type="CDD" id="cd06503">
    <property type="entry name" value="ATP-synt_Fo_b"/>
    <property type="match status" value="1"/>
</dbReference>
<dbReference type="HAMAP" id="MF_01398">
    <property type="entry name" value="ATP_synth_b_bprime"/>
    <property type="match status" value="1"/>
</dbReference>
<dbReference type="InterPro" id="IPR002146">
    <property type="entry name" value="ATP_synth_b/b'su_bac/chlpt"/>
</dbReference>
<dbReference type="NCBIfam" id="NF005606">
    <property type="entry name" value="PRK07352.1"/>
    <property type="match status" value="1"/>
</dbReference>
<dbReference type="PANTHER" id="PTHR34264">
    <property type="entry name" value="ATP SYNTHASE SUBUNIT B, CHLOROPLASTIC"/>
    <property type="match status" value="1"/>
</dbReference>
<dbReference type="PANTHER" id="PTHR34264:SF3">
    <property type="entry name" value="ATP SYNTHASE SUBUNIT B, CHLOROPLASTIC"/>
    <property type="match status" value="1"/>
</dbReference>
<dbReference type="Pfam" id="PF00430">
    <property type="entry name" value="ATP-synt_B"/>
    <property type="match status" value="1"/>
</dbReference>
<feature type="chain" id="PRO_0000082401" description="ATP synthase subunit b, chloroplastic">
    <location>
        <begin position="1"/>
        <end position="184"/>
    </location>
</feature>
<feature type="transmembrane region" description="Helical" evidence="1">
    <location>
        <begin position="29"/>
        <end position="49"/>
    </location>
</feature>
<comment type="function">
    <text evidence="1">F(1)F(0) ATP synthase produces ATP from ADP in the presence of a proton or sodium gradient. F-type ATPases consist of two structural domains, F(1) containing the extramembraneous catalytic core and F(0) containing the membrane proton channel, linked together by a central stalk and a peripheral stalk. During catalysis, ATP synthesis in the catalytic domain of F(1) is coupled via a rotary mechanism of the central stalk subunits to proton translocation.</text>
</comment>
<comment type="function">
    <text evidence="1">Component of the F(0) channel, it forms part of the peripheral stalk, linking F(1) to F(0).</text>
</comment>
<comment type="subunit">
    <text evidence="1">F-type ATPases have 2 components, F(1) - the catalytic core - and F(0) - the membrane proton channel. F(1) has five subunits: alpha(3), beta(3), gamma(1), delta(1), epsilon(1). F(0) has four main subunits: a(1), b(1), b'(1) and c(10-14). The alpha and beta chains form an alternating ring which encloses part of the gamma chain. F(1) is attached to F(0) by a central stalk formed by the gamma and epsilon chains, while a peripheral stalk is formed by the delta, b and b' chains.</text>
</comment>
<comment type="subcellular location">
    <subcellularLocation>
        <location evidence="1">Plastid</location>
        <location evidence="1">Chloroplast thylakoid membrane</location>
        <topology evidence="1">Single-pass membrane protein</topology>
    </subcellularLocation>
</comment>
<comment type="RNA editing">
    <location>
        <position position="6" evidence="2 3"/>
    </location>
    <location>
        <position position="7" evidence="2 3"/>
    </location>
    <location>
        <position position="78" evidence="2 3"/>
    </location>
    <location>
        <position position="139" evidence="2 3"/>
    </location>
    <location>
        <position position="156" evidence="2 3"/>
    </location>
    <text>The nonsense codon at position 139 is modified to a sense codon.</text>
</comment>
<comment type="miscellaneous">
    <text>In plastids the F-type ATPase is also known as CF(1)CF(0).</text>
</comment>
<comment type="similarity">
    <text evidence="1">Belongs to the ATPase B chain family.</text>
</comment>
<gene>
    <name evidence="1" type="primary">atpF</name>
</gene>
<proteinExistence type="evidence at transcript level"/>
<geneLocation type="chloroplast"/>
<reference key="1">
    <citation type="journal article" date="2003" name="Nucleic Acids Res.">
        <title>The complete nucleotide sequence of the hornwort (Anthoceros formosae) chloroplast genome: insight into the earliest land plants.</title>
        <authorList>
            <person name="Kugita M."/>
            <person name="Kaneko A."/>
            <person name="Yamamoto Y."/>
            <person name="Takeya Y."/>
            <person name="Matsumoto T."/>
            <person name="Yoshinaga K."/>
        </authorList>
    </citation>
    <scope>NUCLEOTIDE SEQUENCE [LARGE SCALE GENOMIC DNA]</scope>
    <scope>RNA EDITING</scope>
</reference>
<reference key="2">
    <citation type="journal article" date="2003" name="Nucleic Acids Res.">
        <title>RNA editing in hornwort chloroplasts makes more than half the genes functional.</title>
        <authorList>
            <person name="Kugita M."/>
            <person name="Yamamoto Y."/>
            <person name="Fujikawa T."/>
            <person name="Matsumoto T."/>
            <person name="Yoshinaga K."/>
        </authorList>
    </citation>
    <scope>NUCLEOTIDE SEQUENCE [MRNA]</scope>
    <scope>RNA EDITING</scope>
    <source>
        <tissue>Thallus</tissue>
    </source>
</reference>
<protein>
    <recommendedName>
        <fullName evidence="1">ATP synthase subunit b, chloroplastic</fullName>
    </recommendedName>
    <alternativeName>
        <fullName evidence="1">ATP synthase F(0) sector subunit b</fullName>
    </alternativeName>
    <alternativeName>
        <fullName evidence="1">ATPase subunit I</fullName>
    </alternativeName>
</protein>
<name>ATPF_ANTAG</name>
<sequence length="184" mass="21257">MRNLIFFVIPFHFWLPAEGFKLNTNLLETNLINLGVVLGLLVYFGKGVLNNLLDKRKQTILSTIRDAEERYKEATDKLKQAQIRLQQAELKANEIRVNGLSEMEKEKQDLINIADEDSKRLEDSKNATIRFEEQRAIEQVRQQVSRLALERASEVLNNCLNSELHSRMIDYHIGLLKTMGSTTE</sequence>